<protein>
    <recommendedName>
        <fullName evidence="1">Large ribosomal subunit protein bL20</fullName>
    </recommendedName>
    <alternativeName>
        <fullName evidence="2">50S ribosomal protein L20</fullName>
    </alternativeName>
</protein>
<proteinExistence type="inferred from homology"/>
<name>RL20_RICAE</name>
<organism>
    <name type="scientific">Rickettsia africae (strain ESF-5)</name>
    <dbReference type="NCBI Taxonomy" id="347255"/>
    <lineage>
        <taxon>Bacteria</taxon>
        <taxon>Pseudomonadati</taxon>
        <taxon>Pseudomonadota</taxon>
        <taxon>Alphaproteobacteria</taxon>
        <taxon>Rickettsiales</taxon>
        <taxon>Rickettsiaceae</taxon>
        <taxon>Rickettsieae</taxon>
        <taxon>Rickettsia</taxon>
        <taxon>spotted fever group</taxon>
    </lineage>
</organism>
<keyword id="KW-0687">Ribonucleoprotein</keyword>
<keyword id="KW-0689">Ribosomal protein</keyword>
<keyword id="KW-0694">RNA-binding</keyword>
<keyword id="KW-0699">rRNA-binding</keyword>
<accession>C3PP50</accession>
<reference key="1">
    <citation type="journal article" date="2009" name="BMC Genomics">
        <title>Analysis of the Rickettsia africae genome reveals that virulence acquisition in Rickettsia species may be explained by genome reduction.</title>
        <authorList>
            <person name="Fournier P.-E."/>
            <person name="El Karkouri K."/>
            <person name="Leroy Q."/>
            <person name="Robert C."/>
            <person name="Giumelli B."/>
            <person name="Renesto P."/>
            <person name="Socolovschi C."/>
            <person name="Parola P."/>
            <person name="Audic S."/>
            <person name="Raoult D."/>
        </authorList>
    </citation>
    <scope>NUCLEOTIDE SEQUENCE [LARGE SCALE GENOMIC DNA]</scope>
    <source>
        <strain>ESF-5</strain>
    </source>
</reference>
<sequence length="117" mass="13516">MTRAKSGKISKNRHKKILKLAKGYRGRANSCFRVAIEKVEKALQYAYRDRRNRKRDFRGLWIQRINAAVREHGLVYSQFMGALKKTEIDIDRKVLAELAVNNSDGFVSIVEKAKAHI</sequence>
<gene>
    <name evidence="1" type="primary">rplT</name>
    <name type="ordered locus">RAF_ORF0847</name>
</gene>
<dbReference type="EMBL" id="CP001612">
    <property type="protein sequence ID" value="ACP53710.1"/>
    <property type="molecule type" value="Genomic_DNA"/>
</dbReference>
<dbReference type="RefSeq" id="WP_004997919.1">
    <property type="nucleotide sequence ID" value="NC_012633.1"/>
</dbReference>
<dbReference type="SMR" id="C3PP50"/>
<dbReference type="GeneID" id="95361428"/>
<dbReference type="KEGG" id="raf:RAF_ORF0847"/>
<dbReference type="HOGENOM" id="CLU_123265_0_1_5"/>
<dbReference type="Proteomes" id="UP000002305">
    <property type="component" value="Chromosome"/>
</dbReference>
<dbReference type="GO" id="GO:1990904">
    <property type="term" value="C:ribonucleoprotein complex"/>
    <property type="evidence" value="ECO:0007669"/>
    <property type="project" value="UniProtKB-KW"/>
</dbReference>
<dbReference type="GO" id="GO:0005840">
    <property type="term" value="C:ribosome"/>
    <property type="evidence" value="ECO:0007669"/>
    <property type="project" value="UniProtKB-KW"/>
</dbReference>
<dbReference type="GO" id="GO:0019843">
    <property type="term" value="F:rRNA binding"/>
    <property type="evidence" value="ECO:0007669"/>
    <property type="project" value="UniProtKB-UniRule"/>
</dbReference>
<dbReference type="GO" id="GO:0003735">
    <property type="term" value="F:structural constituent of ribosome"/>
    <property type="evidence" value="ECO:0007669"/>
    <property type="project" value="InterPro"/>
</dbReference>
<dbReference type="GO" id="GO:0000027">
    <property type="term" value="P:ribosomal large subunit assembly"/>
    <property type="evidence" value="ECO:0007669"/>
    <property type="project" value="UniProtKB-UniRule"/>
</dbReference>
<dbReference type="GO" id="GO:0006412">
    <property type="term" value="P:translation"/>
    <property type="evidence" value="ECO:0007669"/>
    <property type="project" value="InterPro"/>
</dbReference>
<dbReference type="CDD" id="cd07026">
    <property type="entry name" value="Ribosomal_L20"/>
    <property type="match status" value="1"/>
</dbReference>
<dbReference type="FunFam" id="1.10.1900.20:FF:000001">
    <property type="entry name" value="50S ribosomal protein L20"/>
    <property type="match status" value="1"/>
</dbReference>
<dbReference type="Gene3D" id="6.10.160.10">
    <property type="match status" value="1"/>
</dbReference>
<dbReference type="Gene3D" id="1.10.1900.20">
    <property type="entry name" value="Ribosomal protein L20"/>
    <property type="match status" value="1"/>
</dbReference>
<dbReference type="HAMAP" id="MF_00382">
    <property type="entry name" value="Ribosomal_bL20"/>
    <property type="match status" value="1"/>
</dbReference>
<dbReference type="InterPro" id="IPR005813">
    <property type="entry name" value="Ribosomal_bL20"/>
</dbReference>
<dbReference type="InterPro" id="IPR049946">
    <property type="entry name" value="RIBOSOMAL_L20_CS"/>
</dbReference>
<dbReference type="InterPro" id="IPR035566">
    <property type="entry name" value="Ribosomal_protein_bL20_C"/>
</dbReference>
<dbReference type="NCBIfam" id="TIGR01032">
    <property type="entry name" value="rplT_bact"/>
    <property type="match status" value="1"/>
</dbReference>
<dbReference type="PANTHER" id="PTHR10986">
    <property type="entry name" value="39S RIBOSOMAL PROTEIN L20"/>
    <property type="match status" value="1"/>
</dbReference>
<dbReference type="Pfam" id="PF00453">
    <property type="entry name" value="Ribosomal_L20"/>
    <property type="match status" value="1"/>
</dbReference>
<dbReference type="PRINTS" id="PR00062">
    <property type="entry name" value="RIBOSOMALL20"/>
</dbReference>
<dbReference type="SUPFAM" id="SSF74731">
    <property type="entry name" value="Ribosomal protein L20"/>
    <property type="match status" value="1"/>
</dbReference>
<dbReference type="PROSITE" id="PS00937">
    <property type="entry name" value="RIBOSOMAL_L20"/>
    <property type="match status" value="1"/>
</dbReference>
<feature type="chain" id="PRO_1000205724" description="Large ribosomal subunit protein bL20">
    <location>
        <begin position="1"/>
        <end position="117"/>
    </location>
</feature>
<evidence type="ECO:0000255" key="1">
    <source>
        <dbReference type="HAMAP-Rule" id="MF_00382"/>
    </source>
</evidence>
<evidence type="ECO:0000305" key="2"/>
<comment type="function">
    <text evidence="1">Binds directly to 23S ribosomal RNA and is necessary for the in vitro assembly process of the 50S ribosomal subunit. It is not involved in the protein synthesizing functions of that subunit.</text>
</comment>
<comment type="similarity">
    <text evidence="1">Belongs to the bacterial ribosomal protein bL20 family.</text>
</comment>